<name>AROA_YERPN</name>
<gene>
    <name evidence="1" type="primary">aroA</name>
    <name type="ordered locus">YPN_2587</name>
    <name type="ORF">YP516_2914</name>
</gene>
<reference key="1">
    <citation type="journal article" date="2006" name="J. Bacteriol.">
        <title>Complete genome sequence of Yersinia pestis strains Antiqua and Nepal516: evidence of gene reduction in an emerging pathogen.</title>
        <authorList>
            <person name="Chain P.S.G."/>
            <person name="Hu P."/>
            <person name="Malfatti S.A."/>
            <person name="Radnedge L."/>
            <person name="Larimer F."/>
            <person name="Vergez L.M."/>
            <person name="Worsham P."/>
            <person name="Chu M.C."/>
            <person name="Andersen G.L."/>
        </authorList>
    </citation>
    <scope>NUCLEOTIDE SEQUENCE [LARGE SCALE GENOMIC DNA]</scope>
    <source>
        <strain>Nepal516</strain>
    </source>
</reference>
<reference key="2">
    <citation type="submission" date="2009-04" db="EMBL/GenBank/DDBJ databases">
        <title>Yersinia pestis Nepal516A whole genome shotgun sequencing project.</title>
        <authorList>
            <person name="Plunkett G. III"/>
            <person name="Anderson B.D."/>
            <person name="Baumler D.J."/>
            <person name="Burland V."/>
            <person name="Cabot E.L."/>
            <person name="Glasner J.D."/>
            <person name="Mau B."/>
            <person name="Neeno-Eckwall E."/>
            <person name="Perna N.T."/>
            <person name="Munk A.C."/>
            <person name="Tapia R."/>
            <person name="Green L.D."/>
            <person name="Rogers Y.C."/>
            <person name="Detter J.C."/>
            <person name="Bruce D.C."/>
            <person name="Brettin T.S."/>
        </authorList>
    </citation>
    <scope>NUCLEOTIDE SEQUENCE [LARGE SCALE GENOMIC DNA]</scope>
    <source>
        <strain>Nepal516</strain>
    </source>
</reference>
<accession>Q1CGG5</accession>
<accession>C4GVS9</accession>
<sequence>MLESLTLQPIALVNGTVNLPGSKSVSNRALLLAALAEGTTQLNNVLDSDDIRHMLNALQALGVDFRLSADRTCCEVDGLGGKLVAEQPLSLFLGNAGTAMRPLAAVLCLGNSDIVLTGEPRMKERPIGHLVDALRQGGAQIDYLEQENYPPLRLRGGFRGGELTVDGRVSSQFLTALLMTAPLAEQDTTIRIMGDLVSKPYIDITLHLMKAFGIDVGHENYQIFHIKGGQTYRSPGTYLVEGDASSASYFLAAAAIKGGTVRVTGIGKKSVQGDTKFADVLEKMGAKVTWGDDYIECSRGELQGIDMDMNHIPDAAMTIATTALFATGPTTIRNIYNWRVKETDRLTAMATELRKVGAEVEEGEDYIRVVPPLQLTAADIGTYDDHRMAMCFSLVALSDTPVTILDPKCTAKTFPDYFEQFARLSQLA</sequence>
<dbReference type="EC" id="2.5.1.19" evidence="1"/>
<dbReference type="EMBL" id="CP000305">
    <property type="protein sequence ID" value="ABG18915.1"/>
    <property type="molecule type" value="Genomic_DNA"/>
</dbReference>
<dbReference type="EMBL" id="ACNQ01000017">
    <property type="protein sequence ID" value="EEO75029.1"/>
    <property type="molecule type" value="Genomic_DNA"/>
</dbReference>
<dbReference type="RefSeq" id="WP_002211325.1">
    <property type="nucleotide sequence ID" value="NZ_ACNQ01000017.1"/>
</dbReference>
<dbReference type="SMR" id="Q1CGG5"/>
<dbReference type="GeneID" id="57977186"/>
<dbReference type="KEGG" id="ypn:YPN_2587"/>
<dbReference type="HOGENOM" id="CLU_024321_0_0_6"/>
<dbReference type="UniPathway" id="UPA00053">
    <property type="reaction ID" value="UER00089"/>
</dbReference>
<dbReference type="Proteomes" id="UP000008936">
    <property type="component" value="Chromosome"/>
</dbReference>
<dbReference type="GO" id="GO:0005737">
    <property type="term" value="C:cytoplasm"/>
    <property type="evidence" value="ECO:0007669"/>
    <property type="project" value="UniProtKB-SubCell"/>
</dbReference>
<dbReference type="GO" id="GO:0003866">
    <property type="term" value="F:3-phosphoshikimate 1-carboxyvinyltransferase activity"/>
    <property type="evidence" value="ECO:0007669"/>
    <property type="project" value="UniProtKB-UniRule"/>
</dbReference>
<dbReference type="GO" id="GO:0008652">
    <property type="term" value="P:amino acid biosynthetic process"/>
    <property type="evidence" value="ECO:0007669"/>
    <property type="project" value="UniProtKB-KW"/>
</dbReference>
<dbReference type="GO" id="GO:0009073">
    <property type="term" value="P:aromatic amino acid family biosynthetic process"/>
    <property type="evidence" value="ECO:0007669"/>
    <property type="project" value="UniProtKB-KW"/>
</dbReference>
<dbReference type="GO" id="GO:0009423">
    <property type="term" value="P:chorismate biosynthetic process"/>
    <property type="evidence" value="ECO:0007669"/>
    <property type="project" value="UniProtKB-UniRule"/>
</dbReference>
<dbReference type="CDD" id="cd01556">
    <property type="entry name" value="EPSP_synthase"/>
    <property type="match status" value="1"/>
</dbReference>
<dbReference type="FunFam" id="3.65.10.10:FF:000003">
    <property type="entry name" value="3-phosphoshikimate 1-carboxyvinyltransferase"/>
    <property type="match status" value="1"/>
</dbReference>
<dbReference type="FunFam" id="3.65.10.10:FF:000004">
    <property type="entry name" value="3-phosphoshikimate 1-carboxyvinyltransferase"/>
    <property type="match status" value="1"/>
</dbReference>
<dbReference type="Gene3D" id="3.65.10.10">
    <property type="entry name" value="Enolpyruvate transferase domain"/>
    <property type="match status" value="2"/>
</dbReference>
<dbReference type="HAMAP" id="MF_00210">
    <property type="entry name" value="EPSP_synth"/>
    <property type="match status" value="1"/>
</dbReference>
<dbReference type="InterPro" id="IPR001986">
    <property type="entry name" value="Enolpyruvate_Tfrase_dom"/>
</dbReference>
<dbReference type="InterPro" id="IPR036968">
    <property type="entry name" value="Enolpyruvate_Tfrase_sf"/>
</dbReference>
<dbReference type="InterPro" id="IPR006264">
    <property type="entry name" value="EPSP_synthase"/>
</dbReference>
<dbReference type="InterPro" id="IPR023193">
    <property type="entry name" value="EPSP_synthase_CS"/>
</dbReference>
<dbReference type="InterPro" id="IPR013792">
    <property type="entry name" value="RNA3'P_cycl/enolpyr_Trfase_a/b"/>
</dbReference>
<dbReference type="NCBIfam" id="TIGR01356">
    <property type="entry name" value="aroA"/>
    <property type="match status" value="1"/>
</dbReference>
<dbReference type="PANTHER" id="PTHR21090">
    <property type="entry name" value="AROM/DEHYDROQUINATE SYNTHASE"/>
    <property type="match status" value="1"/>
</dbReference>
<dbReference type="PANTHER" id="PTHR21090:SF5">
    <property type="entry name" value="PENTAFUNCTIONAL AROM POLYPEPTIDE"/>
    <property type="match status" value="1"/>
</dbReference>
<dbReference type="Pfam" id="PF00275">
    <property type="entry name" value="EPSP_synthase"/>
    <property type="match status" value="1"/>
</dbReference>
<dbReference type="PIRSF" id="PIRSF000505">
    <property type="entry name" value="EPSPS"/>
    <property type="match status" value="1"/>
</dbReference>
<dbReference type="SUPFAM" id="SSF55205">
    <property type="entry name" value="EPT/RTPC-like"/>
    <property type="match status" value="1"/>
</dbReference>
<dbReference type="PROSITE" id="PS00104">
    <property type="entry name" value="EPSP_SYNTHASE_1"/>
    <property type="match status" value="1"/>
</dbReference>
<dbReference type="PROSITE" id="PS00885">
    <property type="entry name" value="EPSP_SYNTHASE_2"/>
    <property type="match status" value="1"/>
</dbReference>
<organism>
    <name type="scientific">Yersinia pestis bv. Antiqua (strain Nepal516)</name>
    <dbReference type="NCBI Taxonomy" id="377628"/>
    <lineage>
        <taxon>Bacteria</taxon>
        <taxon>Pseudomonadati</taxon>
        <taxon>Pseudomonadota</taxon>
        <taxon>Gammaproteobacteria</taxon>
        <taxon>Enterobacterales</taxon>
        <taxon>Yersiniaceae</taxon>
        <taxon>Yersinia</taxon>
    </lineage>
</organism>
<keyword id="KW-0028">Amino-acid biosynthesis</keyword>
<keyword id="KW-0057">Aromatic amino acid biosynthesis</keyword>
<keyword id="KW-0963">Cytoplasm</keyword>
<keyword id="KW-0808">Transferase</keyword>
<protein>
    <recommendedName>
        <fullName evidence="1">3-phosphoshikimate 1-carboxyvinyltransferase</fullName>
        <ecNumber evidence="1">2.5.1.19</ecNumber>
    </recommendedName>
    <alternativeName>
        <fullName evidence="1">5-enolpyruvylshikimate-3-phosphate synthase</fullName>
        <shortName evidence="1">EPSP synthase</shortName>
        <shortName evidence="1">EPSPS</shortName>
    </alternativeName>
</protein>
<feature type="chain" id="PRO_1000012512" description="3-phosphoshikimate 1-carboxyvinyltransferase">
    <location>
        <begin position="1"/>
        <end position="428"/>
    </location>
</feature>
<feature type="active site" description="Proton acceptor" evidence="1">
    <location>
        <position position="314"/>
    </location>
</feature>
<feature type="binding site" evidence="1">
    <location>
        <position position="23"/>
    </location>
    <ligand>
        <name>3-phosphoshikimate</name>
        <dbReference type="ChEBI" id="CHEBI:145989"/>
    </ligand>
</feature>
<feature type="binding site" evidence="1">
    <location>
        <position position="23"/>
    </location>
    <ligand>
        <name>phosphoenolpyruvate</name>
        <dbReference type="ChEBI" id="CHEBI:58702"/>
    </ligand>
</feature>
<feature type="binding site" evidence="1">
    <location>
        <position position="24"/>
    </location>
    <ligand>
        <name>3-phosphoshikimate</name>
        <dbReference type="ChEBI" id="CHEBI:145989"/>
    </ligand>
</feature>
<feature type="binding site" evidence="1">
    <location>
        <position position="28"/>
    </location>
    <ligand>
        <name>3-phosphoshikimate</name>
        <dbReference type="ChEBI" id="CHEBI:145989"/>
    </ligand>
</feature>
<feature type="binding site" evidence="1">
    <location>
        <position position="97"/>
    </location>
    <ligand>
        <name>phosphoenolpyruvate</name>
        <dbReference type="ChEBI" id="CHEBI:58702"/>
    </ligand>
</feature>
<feature type="binding site" evidence="1">
    <location>
        <position position="125"/>
    </location>
    <ligand>
        <name>phosphoenolpyruvate</name>
        <dbReference type="ChEBI" id="CHEBI:58702"/>
    </ligand>
</feature>
<feature type="binding site" evidence="1">
    <location>
        <position position="170"/>
    </location>
    <ligand>
        <name>3-phosphoshikimate</name>
        <dbReference type="ChEBI" id="CHEBI:145989"/>
    </ligand>
</feature>
<feature type="binding site" evidence="1">
    <location>
        <position position="171"/>
    </location>
    <ligand>
        <name>3-phosphoshikimate</name>
        <dbReference type="ChEBI" id="CHEBI:145989"/>
    </ligand>
</feature>
<feature type="binding site" evidence="1">
    <location>
        <position position="172"/>
    </location>
    <ligand>
        <name>3-phosphoshikimate</name>
        <dbReference type="ChEBI" id="CHEBI:145989"/>
    </ligand>
</feature>
<feature type="binding site" evidence="1">
    <location>
        <position position="172"/>
    </location>
    <ligand>
        <name>phosphoenolpyruvate</name>
        <dbReference type="ChEBI" id="CHEBI:58702"/>
    </ligand>
</feature>
<feature type="binding site" evidence="1">
    <location>
        <position position="198"/>
    </location>
    <ligand>
        <name>3-phosphoshikimate</name>
        <dbReference type="ChEBI" id="CHEBI:145989"/>
    </ligand>
</feature>
<feature type="binding site" evidence="1">
    <location>
        <position position="314"/>
    </location>
    <ligand>
        <name>3-phosphoshikimate</name>
        <dbReference type="ChEBI" id="CHEBI:145989"/>
    </ligand>
</feature>
<feature type="binding site" evidence="1">
    <location>
        <position position="337"/>
    </location>
    <ligand>
        <name>3-phosphoshikimate</name>
        <dbReference type="ChEBI" id="CHEBI:145989"/>
    </ligand>
</feature>
<feature type="binding site" evidence="1">
    <location>
        <position position="341"/>
    </location>
    <ligand>
        <name>3-phosphoshikimate</name>
        <dbReference type="ChEBI" id="CHEBI:145989"/>
    </ligand>
</feature>
<feature type="binding site" evidence="1">
    <location>
        <position position="345"/>
    </location>
    <ligand>
        <name>phosphoenolpyruvate</name>
        <dbReference type="ChEBI" id="CHEBI:58702"/>
    </ligand>
</feature>
<feature type="binding site" evidence="1">
    <location>
        <position position="387"/>
    </location>
    <ligand>
        <name>phosphoenolpyruvate</name>
        <dbReference type="ChEBI" id="CHEBI:58702"/>
    </ligand>
</feature>
<feature type="binding site" evidence="1">
    <location>
        <position position="412"/>
    </location>
    <ligand>
        <name>phosphoenolpyruvate</name>
        <dbReference type="ChEBI" id="CHEBI:58702"/>
    </ligand>
</feature>
<evidence type="ECO:0000255" key="1">
    <source>
        <dbReference type="HAMAP-Rule" id="MF_00210"/>
    </source>
</evidence>
<comment type="function">
    <text evidence="1">Catalyzes the transfer of the enolpyruvyl moiety of phosphoenolpyruvate (PEP) to the 5-hydroxyl of shikimate-3-phosphate (S3P) to produce enolpyruvyl shikimate-3-phosphate and inorganic phosphate.</text>
</comment>
<comment type="catalytic activity">
    <reaction evidence="1">
        <text>3-phosphoshikimate + phosphoenolpyruvate = 5-O-(1-carboxyvinyl)-3-phosphoshikimate + phosphate</text>
        <dbReference type="Rhea" id="RHEA:21256"/>
        <dbReference type="ChEBI" id="CHEBI:43474"/>
        <dbReference type="ChEBI" id="CHEBI:57701"/>
        <dbReference type="ChEBI" id="CHEBI:58702"/>
        <dbReference type="ChEBI" id="CHEBI:145989"/>
        <dbReference type="EC" id="2.5.1.19"/>
    </reaction>
    <physiologicalReaction direction="left-to-right" evidence="1">
        <dbReference type="Rhea" id="RHEA:21257"/>
    </physiologicalReaction>
</comment>
<comment type="pathway">
    <text evidence="1">Metabolic intermediate biosynthesis; chorismate biosynthesis; chorismate from D-erythrose 4-phosphate and phosphoenolpyruvate: step 6/7.</text>
</comment>
<comment type="subunit">
    <text evidence="1">Monomer.</text>
</comment>
<comment type="subcellular location">
    <subcellularLocation>
        <location evidence="1">Cytoplasm</location>
    </subcellularLocation>
</comment>
<comment type="similarity">
    <text evidence="1">Belongs to the EPSP synthase family.</text>
</comment>
<proteinExistence type="inferred from homology"/>